<dbReference type="EC" id="1.11.1.24" evidence="1"/>
<dbReference type="EMBL" id="AE016828">
    <property type="protein sequence ID" value="AAO90485.2"/>
    <property type="status" value="ALT_INIT"/>
    <property type="molecule type" value="Genomic_DNA"/>
</dbReference>
<dbReference type="RefSeq" id="NP_819971.2">
    <property type="nucleotide sequence ID" value="NC_002971.3"/>
</dbReference>
<dbReference type="RefSeq" id="WP_010957921.1">
    <property type="nucleotide sequence ID" value="NC_002971.4"/>
</dbReference>
<dbReference type="SMR" id="Q83CY8"/>
<dbReference type="STRING" id="227377.CBU_0963"/>
<dbReference type="PeroxiBase" id="4369">
    <property type="entry name" value="CbuBCP"/>
</dbReference>
<dbReference type="EnsemblBacteria" id="AAO90485">
    <property type="protein sequence ID" value="AAO90485"/>
    <property type="gene ID" value="CBU_0963"/>
</dbReference>
<dbReference type="GeneID" id="1208858"/>
<dbReference type="KEGG" id="cbu:CBU_0963"/>
<dbReference type="PATRIC" id="fig|227377.7.peg.959"/>
<dbReference type="eggNOG" id="COG1225">
    <property type="taxonomic scope" value="Bacteria"/>
</dbReference>
<dbReference type="HOGENOM" id="CLU_042529_14_1_6"/>
<dbReference type="OrthoDB" id="9812811at2"/>
<dbReference type="Proteomes" id="UP000002671">
    <property type="component" value="Chromosome"/>
</dbReference>
<dbReference type="GO" id="GO:0005737">
    <property type="term" value="C:cytoplasm"/>
    <property type="evidence" value="ECO:0000318"/>
    <property type="project" value="GO_Central"/>
</dbReference>
<dbReference type="GO" id="GO:0008379">
    <property type="term" value="F:thioredoxin peroxidase activity"/>
    <property type="evidence" value="ECO:0000318"/>
    <property type="project" value="GO_Central"/>
</dbReference>
<dbReference type="GO" id="GO:0045454">
    <property type="term" value="P:cell redox homeostasis"/>
    <property type="evidence" value="ECO:0000318"/>
    <property type="project" value="GO_Central"/>
</dbReference>
<dbReference type="GO" id="GO:0034599">
    <property type="term" value="P:cellular response to oxidative stress"/>
    <property type="evidence" value="ECO:0000318"/>
    <property type="project" value="GO_Central"/>
</dbReference>
<dbReference type="CDD" id="cd03017">
    <property type="entry name" value="PRX_BCP"/>
    <property type="match status" value="1"/>
</dbReference>
<dbReference type="FunFam" id="3.40.30.10:FF:000007">
    <property type="entry name" value="Thioredoxin-dependent thiol peroxidase"/>
    <property type="match status" value="1"/>
</dbReference>
<dbReference type="Gene3D" id="3.40.30.10">
    <property type="entry name" value="Glutaredoxin"/>
    <property type="match status" value="1"/>
</dbReference>
<dbReference type="InterPro" id="IPR000866">
    <property type="entry name" value="AhpC/TSA"/>
</dbReference>
<dbReference type="InterPro" id="IPR024706">
    <property type="entry name" value="Peroxiredoxin_AhpC-typ"/>
</dbReference>
<dbReference type="InterPro" id="IPR050924">
    <property type="entry name" value="Peroxiredoxin_BCP/PrxQ"/>
</dbReference>
<dbReference type="InterPro" id="IPR036249">
    <property type="entry name" value="Thioredoxin-like_sf"/>
</dbReference>
<dbReference type="InterPro" id="IPR013766">
    <property type="entry name" value="Thioredoxin_domain"/>
</dbReference>
<dbReference type="NCBIfam" id="NF006960">
    <property type="entry name" value="PRK09437.1"/>
    <property type="match status" value="1"/>
</dbReference>
<dbReference type="PANTHER" id="PTHR42801:SF4">
    <property type="entry name" value="AHPC_TSA FAMILY PROTEIN"/>
    <property type="match status" value="1"/>
</dbReference>
<dbReference type="PANTHER" id="PTHR42801">
    <property type="entry name" value="THIOREDOXIN-DEPENDENT PEROXIDE REDUCTASE"/>
    <property type="match status" value="1"/>
</dbReference>
<dbReference type="Pfam" id="PF00578">
    <property type="entry name" value="AhpC-TSA"/>
    <property type="match status" value="1"/>
</dbReference>
<dbReference type="PIRSF" id="PIRSF000239">
    <property type="entry name" value="AHPC"/>
    <property type="match status" value="1"/>
</dbReference>
<dbReference type="SUPFAM" id="SSF52833">
    <property type="entry name" value="Thioredoxin-like"/>
    <property type="match status" value="1"/>
</dbReference>
<dbReference type="PROSITE" id="PS51352">
    <property type="entry name" value="THIOREDOXIN_2"/>
    <property type="match status" value="1"/>
</dbReference>
<evidence type="ECO:0000250" key="1">
    <source>
        <dbReference type="UniProtKB" id="P0AE52"/>
    </source>
</evidence>
<evidence type="ECO:0000255" key="2">
    <source>
        <dbReference type="PROSITE-ProRule" id="PRU00691"/>
    </source>
</evidence>
<evidence type="ECO:0000269" key="3">
    <source>
    </source>
</evidence>
<evidence type="ECO:0000305" key="4"/>
<sequence length="151" mass="16850">MSIEVGQKAPIFTLPTDEGEMLSLDDLKGKKVILYFYPKDDTPGCTKEACGFRDVWSQLSKAGVVVLGISKDSVKAHQSFKQKYNLPFTLLSDKDNTVCEQYGVMVDKNRFGKKYKGIERTTFLIDEEGVISAVWPKVKVDGHVAEVVGRL</sequence>
<name>BCP_COXBU</name>
<keyword id="KW-0049">Antioxidant</keyword>
<keyword id="KW-1015">Disulfide bond</keyword>
<keyword id="KW-0560">Oxidoreductase</keyword>
<keyword id="KW-0575">Peroxidase</keyword>
<keyword id="KW-0676">Redox-active center</keyword>
<keyword id="KW-1185">Reference proteome</keyword>
<feature type="chain" id="PRO_0000320581" description="Putative peroxiredoxin bcp">
    <location>
        <begin position="1"/>
        <end position="151"/>
    </location>
</feature>
<feature type="domain" description="Thioredoxin" evidence="2">
    <location>
        <begin position="3"/>
        <end position="151"/>
    </location>
</feature>
<feature type="active site" description="Cysteine sulfenic acid (-SOH) intermediate" evidence="1">
    <location>
        <position position="45"/>
    </location>
</feature>
<feature type="disulfide bond" description="Redox-active" evidence="1">
    <location>
        <begin position="45"/>
        <end position="50"/>
    </location>
</feature>
<protein>
    <recommendedName>
        <fullName>Putative peroxiredoxin bcp</fullName>
        <ecNumber evidence="1">1.11.1.24</ecNumber>
    </recommendedName>
    <alternativeName>
        <fullName>Bacterioferritin comigratory protein</fullName>
    </alternativeName>
    <alternativeName>
        <fullName>Thioredoxin peroxidase</fullName>
    </alternativeName>
    <alternativeName>
        <fullName evidence="4">Thioredoxin-dependent peroxiredoxin Bcp</fullName>
    </alternativeName>
</protein>
<accession>Q83CY8</accession>
<organism>
    <name type="scientific">Coxiella burnetii (strain RSA 493 / Nine Mile phase I)</name>
    <dbReference type="NCBI Taxonomy" id="227377"/>
    <lineage>
        <taxon>Bacteria</taxon>
        <taxon>Pseudomonadati</taxon>
        <taxon>Pseudomonadota</taxon>
        <taxon>Gammaproteobacteria</taxon>
        <taxon>Legionellales</taxon>
        <taxon>Coxiellaceae</taxon>
        <taxon>Coxiella</taxon>
    </lineage>
</organism>
<comment type="function">
    <text evidence="1">Thiol-specific peroxidase that catalyzes the reduction of hydrogen peroxide and organic hydroperoxides to water and alcohols, respectively. Plays a role in cell protection against oxidative stress by detoxifying peroxides and as sensor of hydrogen peroxide-mediated signaling events.</text>
</comment>
<comment type="catalytic activity">
    <reaction evidence="1">
        <text>a hydroperoxide + [thioredoxin]-dithiol = an alcohol + [thioredoxin]-disulfide + H2O</text>
        <dbReference type="Rhea" id="RHEA:62620"/>
        <dbReference type="Rhea" id="RHEA-COMP:10698"/>
        <dbReference type="Rhea" id="RHEA-COMP:10700"/>
        <dbReference type="ChEBI" id="CHEBI:15377"/>
        <dbReference type="ChEBI" id="CHEBI:29950"/>
        <dbReference type="ChEBI" id="CHEBI:30879"/>
        <dbReference type="ChEBI" id="CHEBI:35924"/>
        <dbReference type="ChEBI" id="CHEBI:50058"/>
        <dbReference type="EC" id="1.11.1.24"/>
    </reaction>
</comment>
<comment type="subunit">
    <text evidence="1">Monomer.</text>
</comment>
<comment type="developmental stage">
    <text evidence="3">More than twofold more abundant in the large cell variant (LCV) stage than in the small cell variant (SCV) stage (at protein level). LCVs are more metabolically active than SCVs.</text>
</comment>
<comment type="miscellaneous">
    <text evidence="1">The active site is a conserved redox-active cysteine residue, the peroxidatic cysteine (C(P)), which makes the nucleophilic attack on the peroxide substrate. The peroxide oxidizes the C(P)-SH to cysteine sulfenic acid (C(P)-SOH), which then reacts with another cysteine residue, the resolving cysteine (C(R)), to form a disulfide bridge. The disulfide is subsequently reduced by an appropriate electron donor to complete the catalytic cycle. In this atypical 2-Cys peroxiredoxin, C(R) is present in the same subunit to form an intramolecular disulfide. The disulfide is subsequently reduced by thioredoxin.</text>
</comment>
<comment type="similarity">
    <text evidence="4">Belongs to the peroxiredoxin family. BCP/PrxQ subfamily.</text>
</comment>
<comment type="sequence caution" evidence="4">
    <conflict type="erroneous initiation">
        <sequence resource="EMBL-CDS" id="AAO90485"/>
    </conflict>
</comment>
<proteinExistence type="evidence at protein level"/>
<reference key="1">
    <citation type="journal article" date="2003" name="Proc. Natl. Acad. Sci. U.S.A.">
        <title>Complete genome sequence of the Q-fever pathogen, Coxiella burnetii.</title>
        <authorList>
            <person name="Seshadri R."/>
            <person name="Paulsen I.T."/>
            <person name="Eisen J.A."/>
            <person name="Read T.D."/>
            <person name="Nelson K.E."/>
            <person name="Nelson W.C."/>
            <person name="Ward N.L."/>
            <person name="Tettelin H."/>
            <person name="Davidsen T.M."/>
            <person name="Beanan M.J."/>
            <person name="DeBoy R.T."/>
            <person name="Daugherty S.C."/>
            <person name="Brinkac L.M."/>
            <person name="Madupu R."/>
            <person name="Dodson R.J."/>
            <person name="Khouri H.M."/>
            <person name="Lee K.H."/>
            <person name="Carty H.A."/>
            <person name="Scanlan D."/>
            <person name="Heinzen R.A."/>
            <person name="Thompson H.A."/>
            <person name="Samuel J.E."/>
            <person name="Fraser C.M."/>
            <person name="Heidelberg J.F."/>
        </authorList>
    </citation>
    <scope>NUCLEOTIDE SEQUENCE [LARGE SCALE GENOMIC DNA]</scope>
    <source>
        <strain>RSA 493 / Nine Mile phase I</strain>
    </source>
</reference>
<reference key="2">
    <citation type="journal article" date="2007" name="Infect. Immun.">
        <title>Proteome and antigen profiling of Coxiella burnetii developmental forms.</title>
        <authorList>
            <person name="Coleman S.A."/>
            <person name="Fischer E.R."/>
            <person name="Cockrell D.C."/>
            <person name="Voth D.E."/>
            <person name="Howe D."/>
            <person name="Mead D.J."/>
            <person name="Samuel J.E."/>
            <person name="Heinzen R.A."/>
        </authorList>
    </citation>
    <scope>IDENTIFICATION BY MASS SPECTROMETRY</scope>
    <scope>DEVELOPMENTAL STAGE</scope>
    <source>
        <strain>Nine Mile Crazy / RSA 514</strain>
    </source>
</reference>
<gene>
    <name type="primary">bcp</name>
    <name type="ordered locus">CBU_0963</name>
</gene>